<gene>
    <name type="ordered locus">Avi_2676</name>
</gene>
<keyword id="KW-0378">Hydrolase</keyword>
<keyword id="KW-1185">Reference proteome</keyword>
<dbReference type="EMBL" id="CP000633">
    <property type="protein sequence ID" value="ACM36925.1"/>
    <property type="molecule type" value="Genomic_DNA"/>
</dbReference>
<dbReference type="RefSeq" id="WP_015916346.1">
    <property type="nucleotide sequence ID" value="NC_011989.1"/>
</dbReference>
<dbReference type="SMR" id="B9JXE7"/>
<dbReference type="STRING" id="311402.Avi_2676"/>
<dbReference type="KEGG" id="avi:Avi_2676"/>
<dbReference type="eggNOG" id="COG0232">
    <property type="taxonomic scope" value="Bacteria"/>
</dbReference>
<dbReference type="HOGENOM" id="CLU_028163_1_0_5"/>
<dbReference type="Proteomes" id="UP000001596">
    <property type="component" value="Chromosome 1"/>
</dbReference>
<dbReference type="GO" id="GO:0008832">
    <property type="term" value="F:dGTPase activity"/>
    <property type="evidence" value="ECO:0007669"/>
    <property type="project" value="TreeGrafter"/>
</dbReference>
<dbReference type="GO" id="GO:0006203">
    <property type="term" value="P:dGTP catabolic process"/>
    <property type="evidence" value="ECO:0007669"/>
    <property type="project" value="TreeGrafter"/>
</dbReference>
<dbReference type="CDD" id="cd00077">
    <property type="entry name" value="HDc"/>
    <property type="match status" value="1"/>
</dbReference>
<dbReference type="Gene3D" id="1.10.3210.10">
    <property type="entry name" value="Hypothetical protein af1432"/>
    <property type="match status" value="1"/>
</dbReference>
<dbReference type="HAMAP" id="MF_01212">
    <property type="entry name" value="dGTPase_type2"/>
    <property type="match status" value="1"/>
</dbReference>
<dbReference type="InterPro" id="IPR006261">
    <property type="entry name" value="dGTPase"/>
</dbReference>
<dbReference type="InterPro" id="IPR050135">
    <property type="entry name" value="dGTPase-like"/>
</dbReference>
<dbReference type="InterPro" id="IPR023023">
    <property type="entry name" value="dNTPase_2"/>
</dbReference>
<dbReference type="InterPro" id="IPR003607">
    <property type="entry name" value="HD/PDEase_dom"/>
</dbReference>
<dbReference type="InterPro" id="IPR006674">
    <property type="entry name" value="HD_domain"/>
</dbReference>
<dbReference type="InterPro" id="IPR026875">
    <property type="entry name" value="PHydrolase_assoc_dom"/>
</dbReference>
<dbReference type="NCBIfam" id="TIGR01353">
    <property type="entry name" value="dGTP_triPase"/>
    <property type="match status" value="1"/>
</dbReference>
<dbReference type="NCBIfam" id="NF002326">
    <property type="entry name" value="PRK01286.1-1"/>
    <property type="match status" value="1"/>
</dbReference>
<dbReference type="NCBIfam" id="NF002328">
    <property type="entry name" value="PRK01286.1-3"/>
    <property type="match status" value="1"/>
</dbReference>
<dbReference type="PANTHER" id="PTHR11373:SF43">
    <property type="entry name" value="DEOXYGUANOSINETRIPHOSPHATE TRIPHOSPHOHYDROLASE-LIKE PROTEIN"/>
    <property type="match status" value="1"/>
</dbReference>
<dbReference type="PANTHER" id="PTHR11373">
    <property type="entry name" value="DEOXYNUCLEOSIDE TRIPHOSPHATE TRIPHOSPHOHYDROLASE"/>
    <property type="match status" value="1"/>
</dbReference>
<dbReference type="Pfam" id="PF01966">
    <property type="entry name" value="HD"/>
    <property type="match status" value="1"/>
</dbReference>
<dbReference type="Pfam" id="PF13286">
    <property type="entry name" value="HD_assoc"/>
    <property type="match status" value="1"/>
</dbReference>
<dbReference type="SMART" id="SM00471">
    <property type="entry name" value="HDc"/>
    <property type="match status" value="1"/>
</dbReference>
<dbReference type="SUPFAM" id="SSF109604">
    <property type="entry name" value="HD-domain/PDEase-like"/>
    <property type="match status" value="1"/>
</dbReference>
<dbReference type="PROSITE" id="PS51831">
    <property type="entry name" value="HD"/>
    <property type="match status" value="1"/>
</dbReference>
<comment type="similarity">
    <text evidence="1">Belongs to the dGTPase family. Type 2 subfamily.</text>
</comment>
<evidence type="ECO:0000255" key="1">
    <source>
        <dbReference type="HAMAP-Rule" id="MF_01212"/>
    </source>
</evidence>
<evidence type="ECO:0000255" key="2">
    <source>
        <dbReference type="PROSITE-ProRule" id="PRU01175"/>
    </source>
</evidence>
<accession>B9JXE7</accession>
<protein>
    <recommendedName>
        <fullName evidence="1">Deoxyguanosinetriphosphate triphosphohydrolase-like protein</fullName>
    </recommendedName>
</protein>
<sequence>MTIDRNALGFGVGERAIFAADPWNSRGRLYPEGGSLTRSDFQRDRDRIVHTTAFRRLKHKTQVFIGPDSDHYRTRLTHTIEVAQIARALARAFRIDEDLAEGVALVHDFGHTPFGHTGEDALHELLEPYGGFDHNAQSLRIVTKLERRYAEFDGLNLTWETLEGLVKHNGPLMNADGEGTRGPVPLPITEYCQMQDLDIASHASLEAQAAAVADDIAYNTHDIDDGLRSGYLTFDMLEDVPFLAGLMRDVRDRYPNLEADRFTHEIMRRQITRMVEDVIAVAQERLARIRPMSADDIRQAGETVITFSEGMAETDRQIKKLLFSKIYRHPDIMRIRAGAAQIVTDLFKAYMADPTLMRSDYWVEHTAGLETPAKARHVGDFLAGMTDTYAVRVHRQLFDHTPDLR</sequence>
<organism>
    <name type="scientific">Allorhizobium ampelinum (strain ATCC BAA-846 / DSM 112012 / S4)</name>
    <name type="common">Agrobacterium vitis (strain S4)</name>
    <dbReference type="NCBI Taxonomy" id="311402"/>
    <lineage>
        <taxon>Bacteria</taxon>
        <taxon>Pseudomonadati</taxon>
        <taxon>Pseudomonadota</taxon>
        <taxon>Alphaproteobacteria</taxon>
        <taxon>Hyphomicrobiales</taxon>
        <taxon>Rhizobiaceae</taxon>
        <taxon>Rhizobium/Agrobacterium group</taxon>
        <taxon>Allorhizobium</taxon>
        <taxon>Allorhizobium ampelinum</taxon>
    </lineage>
</organism>
<reference key="1">
    <citation type="journal article" date="2009" name="J. Bacteriol.">
        <title>Genome sequences of three Agrobacterium biovars help elucidate the evolution of multichromosome genomes in bacteria.</title>
        <authorList>
            <person name="Slater S.C."/>
            <person name="Goldman B.S."/>
            <person name="Goodner B."/>
            <person name="Setubal J.C."/>
            <person name="Farrand S.K."/>
            <person name="Nester E.W."/>
            <person name="Burr T.J."/>
            <person name="Banta L."/>
            <person name="Dickerman A.W."/>
            <person name="Paulsen I."/>
            <person name="Otten L."/>
            <person name="Suen G."/>
            <person name="Welch R."/>
            <person name="Almeida N.F."/>
            <person name="Arnold F."/>
            <person name="Burton O.T."/>
            <person name="Du Z."/>
            <person name="Ewing A."/>
            <person name="Godsy E."/>
            <person name="Heisel S."/>
            <person name="Houmiel K.L."/>
            <person name="Jhaveri J."/>
            <person name="Lu J."/>
            <person name="Miller N.M."/>
            <person name="Norton S."/>
            <person name="Chen Q."/>
            <person name="Phoolcharoen W."/>
            <person name="Ohlin V."/>
            <person name="Ondrusek D."/>
            <person name="Pride N."/>
            <person name="Stricklin S.L."/>
            <person name="Sun J."/>
            <person name="Wheeler C."/>
            <person name="Wilson L."/>
            <person name="Zhu H."/>
            <person name="Wood D.W."/>
        </authorList>
    </citation>
    <scope>NUCLEOTIDE SEQUENCE [LARGE SCALE GENOMIC DNA]</scope>
    <source>
        <strain>ATCC BAA-846 / DSM 112012 / S4</strain>
    </source>
</reference>
<name>DGTL1_ALLAM</name>
<proteinExistence type="inferred from homology"/>
<feature type="chain" id="PRO_1000164730" description="Deoxyguanosinetriphosphate triphosphohydrolase-like protein">
    <location>
        <begin position="1"/>
        <end position="405"/>
    </location>
</feature>
<feature type="domain" description="HD" evidence="2">
    <location>
        <begin position="75"/>
        <end position="219"/>
    </location>
</feature>